<keyword id="KW-0997">Cell inner membrane</keyword>
<keyword id="KW-1003">Cell membrane</keyword>
<keyword id="KW-0472">Membrane</keyword>
<keyword id="KW-0812">Transmembrane</keyword>
<keyword id="KW-1133">Transmembrane helix</keyword>
<protein>
    <recommendedName>
        <fullName evidence="1">UPF0761 membrane protein YihY</fullName>
    </recommendedName>
</protein>
<sequence length="290" mass="32820">MLKTIQDKARHRTRPLWAWLKLLWQRIDEDNMTTLAGNLAYVSLLSLVPLVAVVFALFAAFPMFSDVSIQLRHFIFANFLPATGDVIQRYIEQFVANSNKMTAVGACGLIVTALLLMYSIDSALNTIWRSKRARPKIYSFAVYWMILTLGPLLAGASLAISSYLLSLRWASDLNTVIDNVLRIFPLLLSWISFWLLYSIVPTIRVPNRDAIVGAFVAALLFEAGKKGFALYITMFPSYQLIYGVLAVIPILFVWVYWTWCIVLLGAEITVTLGEYHKLKQAAEQEEDDEP</sequence>
<proteinExistence type="inferred from homology"/>
<gene>
    <name evidence="1" type="primary">yihY</name>
    <name type="ordered locus">SBO_3900</name>
</gene>
<name>YIHY_SHIBS</name>
<feature type="chain" id="PRO_0000391058" description="UPF0761 membrane protein YihY">
    <location>
        <begin position="1"/>
        <end position="290"/>
    </location>
</feature>
<feature type="transmembrane region" description="Helical" evidence="1">
    <location>
        <begin position="44"/>
        <end position="64"/>
    </location>
</feature>
<feature type="transmembrane region" description="Helical" evidence="1">
    <location>
        <begin position="104"/>
        <end position="124"/>
    </location>
</feature>
<feature type="transmembrane region" description="Helical" evidence="1">
    <location>
        <begin position="140"/>
        <end position="160"/>
    </location>
</feature>
<feature type="transmembrane region" description="Helical" evidence="1">
    <location>
        <begin position="183"/>
        <end position="203"/>
    </location>
</feature>
<feature type="transmembrane region" description="Helical" evidence="1">
    <location>
        <begin position="210"/>
        <end position="230"/>
    </location>
</feature>
<feature type="transmembrane region" description="Helical" evidence="1">
    <location>
        <begin position="244"/>
        <end position="264"/>
    </location>
</feature>
<reference key="1">
    <citation type="journal article" date="2005" name="Nucleic Acids Res.">
        <title>Genome dynamics and diversity of Shigella species, the etiologic agents of bacillary dysentery.</title>
        <authorList>
            <person name="Yang F."/>
            <person name="Yang J."/>
            <person name="Zhang X."/>
            <person name="Chen L."/>
            <person name="Jiang Y."/>
            <person name="Yan Y."/>
            <person name="Tang X."/>
            <person name="Wang J."/>
            <person name="Xiong Z."/>
            <person name="Dong J."/>
            <person name="Xue Y."/>
            <person name="Zhu Y."/>
            <person name="Xu X."/>
            <person name="Sun L."/>
            <person name="Chen S."/>
            <person name="Nie H."/>
            <person name="Peng J."/>
            <person name="Xu J."/>
            <person name="Wang Y."/>
            <person name="Yuan Z."/>
            <person name="Wen Y."/>
            <person name="Yao Z."/>
            <person name="Shen Y."/>
            <person name="Qiang B."/>
            <person name="Hou Y."/>
            <person name="Yu J."/>
            <person name="Jin Q."/>
        </authorList>
    </citation>
    <scope>NUCLEOTIDE SEQUENCE [LARGE SCALE GENOMIC DNA]</scope>
    <source>
        <strain>Sb227</strain>
    </source>
</reference>
<evidence type="ECO:0000255" key="1">
    <source>
        <dbReference type="HAMAP-Rule" id="MF_00672"/>
    </source>
</evidence>
<evidence type="ECO:0000305" key="2"/>
<comment type="subcellular location">
    <subcellularLocation>
        <location evidence="1">Cell inner membrane</location>
        <topology evidence="1">Multi-pass membrane protein</topology>
    </subcellularLocation>
</comment>
<comment type="similarity">
    <text evidence="1">Belongs to the UPF0761 family.</text>
</comment>
<comment type="sequence caution" evidence="2">
    <conflict type="frameshift">
        <sequence resource="EMBL-CDS" id="ABB68351"/>
    </conflict>
</comment>
<organism>
    <name type="scientific">Shigella boydii serotype 4 (strain Sb227)</name>
    <dbReference type="NCBI Taxonomy" id="300268"/>
    <lineage>
        <taxon>Bacteria</taxon>
        <taxon>Pseudomonadati</taxon>
        <taxon>Pseudomonadota</taxon>
        <taxon>Gammaproteobacteria</taxon>
        <taxon>Enterobacterales</taxon>
        <taxon>Enterobacteriaceae</taxon>
        <taxon>Shigella</taxon>
    </lineage>
</organism>
<accession>Q31UA7</accession>
<dbReference type="EMBL" id="CP000036">
    <property type="protein sequence ID" value="ABB68351.1"/>
    <property type="status" value="ALT_FRAME"/>
    <property type="molecule type" value="Genomic_DNA"/>
</dbReference>
<dbReference type="KEGG" id="sbo:SBO_3900"/>
<dbReference type="HOGENOM" id="CLU_032288_0_0_6"/>
<dbReference type="Proteomes" id="UP000007067">
    <property type="component" value="Chromosome"/>
</dbReference>
<dbReference type="GO" id="GO:0005886">
    <property type="term" value="C:plasma membrane"/>
    <property type="evidence" value="ECO:0007669"/>
    <property type="project" value="UniProtKB-SubCell"/>
</dbReference>
<dbReference type="HAMAP" id="MF_00672">
    <property type="entry name" value="UPF0761"/>
    <property type="match status" value="1"/>
</dbReference>
<dbReference type="InterPro" id="IPR023679">
    <property type="entry name" value="UPF0761_bac"/>
</dbReference>
<dbReference type="InterPro" id="IPR017039">
    <property type="entry name" value="Virul_fac_BrkB"/>
</dbReference>
<dbReference type="NCBIfam" id="NF002457">
    <property type="entry name" value="PRK01637.1"/>
    <property type="match status" value="1"/>
</dbReference>
<dbReference type="NCBIfam" id="TIGR00765">
    <property type="entry name" value="yihY_not_rbn"/>
    <property type="match status" value="1"/>
</dbReference>
<dbReference type="PANTHER" id="PTHR30213">
    <property type="entry name" value="INNER MEMBRANE PROTEIN YHJD"/>
    <property type="match status" value="1"/>
</dbReference>
<dbReference type="PANTHER" id="PTHR30213:SF0">
    <property type="entry name" value="UPF0761 MEMBRANE PROTEIN YIHY"/>
    <property type="match status" value="1"/>
</dbReference>
<dbReference type="Pfam" id="PF03631">
    <property type="entry name" value="Virul_fac_BrkB"/>
    <property type="match status" value="1"/>
</dbReference>
<dbReference type="PIRSF" id="PIRSF035875">
    <property type="entry name" value="RNase_BN"/>
    <property type="match status" value="1"/>
</dbReference>